<proteinExistence type="inferred from homology"/>
<name>METE_NEIG1</name>
<organism>
    <name type="scientific">Neisseria gonorrhoeae (strain ATCC 700825 / FA 1090)</name>
    <dbReference type="NCBI Taxonomy" id="242231"/>
    <lineage>
        <taxon>Bacteria</taxon>
        <taxon>Pseudomonadati</taxon>
        <taxon>Pseudomonadota</taxon>
        <taxon>Betaproteobacteria</taxon>
        <taxon>Neisseriales</taxon>
        <taxon>Neisseriaceae</taxon>
        <taxon>Neisseria</taxon>
    </lineage>
</organism>
<comment type="function">
    <text evidence="1">Catalyzes the transfer of a methyl group from 5-methyltetrahydrofolate to homocysteine resulting in methionine formation.</text>
</comment>
<comment type="catalytic activity">
    <reaction evidence="1">
        <text>5-methyltetrahydropteroyltri-L-glutamate + L-homocysteine = tetrahydropteroyltri-L-glutamate + L-methionine</text>
        <dbReference type="Rhea" id="RHEA:21196"/>
        <dbReference type="ChEBI" id="CHEBI:57844"/>
        <dbReference type="ChEBI" id="CHEBI:58140"/>
        <dbReference type="ChEBI" id="CHEBI:58199"/>
        <dbReference type="ChEBI" id="CHEBI:58207"/>
        <dbReference type="EC" id="2.1.1.14"/>
    </reaction>
</comment>
<comment type="cofactor">
    <cofactor evidence="1">
        <name>Zn(2+)</name>
        <dbReference type="ChEBI" id="CHEBI:29105"/>
    </cofactor>
    <text evidence="1">Binds 1 zinc ion per subunit.</text>
</comment>
<comment type="pathway">
    <text evidence="1">Amino-acid biosynthesis; L-methionine biosynthesis via de novo pathway; L-methionine from L-homocysteine (MetE route): step 1/1.</text>
</comment>
<comment type="similarity">
    <text evidence="1">Belongs to the vitamin-B12 independent methionine synthase family.</text>
</comment>
<dbReference type="EC" id="2.1.1.14" evidence="1"/>
<dbReference type="EMBL" id="AE004969">
    <property type="protein sequence ID" value="AAW89624.1"/>
    <property type="molecule type" value="Genomic_DNA"/>
</dbReference>
<dbReference type="RefSeq" id="WP_003688382.1">
    <property type="nucleotide sequence ID" value="NC_002946.2"/>
</dbReference>
<dbReference type="RefSeq" id="YP_208036.1">
    <property type="nucleotide sequence ID" value="NC_002946.2"/>
</dbReference>
<dbReference type="SMR" id="Q5F863"/>
<dbReference type="STRING" id="242231.NGO_0928"/>
<dbReference type="KEGG" id="ngo:NGO_0928"/>
<dbReference type="PATRIC" id="fig|242231.10.peg.1089"/>
<dbReference type="HOGENOM" id="CLU_013175_0_0_4"/>
<dbReference type="UniPathway" id="UPA00051">
    <property type="reaction ID" value="UER00082"/>
</dbReference>
<dbReference type="Proteomes" id="UP000000535">
    <property type="component" value="Chromosome"/>
</dbReference>
<dbReference type="GO" id="GO:0003871">
    <property type="term" value="F:5-methyltetrahydropteroyltriglutamate-homocysteine S-methyltransferase activity"/>
    <property type="evidence" value="ECO:0007669"/>
    <property type="project" value="UniProtKB-UniRule"/>
</dbReference>
<dbReference type="GO" id="GO:0008270">
    <property type="term" value="F:zinc ion binding"/>
    <property type="evidence" value="ECO:0007669"/>
    <property type="project" value="InterPro"/>
</dbReference>
<dbReference type="GO" id="GO:0009086">
    <property type="term" value="P:methionine biosynthetic process"/>
    <property type="evidence" value="ECO:0007669"/>
    <property type="project" value="UniProtKB-UniRule"/>
</dbReference>
<dbReference type="GO" id="GO:0032259">
    <property type="term" value="P:methylation"/>
    <property type="evidence" value="ECO:0007669"/>
    <property type="project" value="UniProtKB-KW"/>
</dbReference>
<dbReference type="CDD" id="cd03311">
    <property type="entry name" value="CIMS_C_terminal_like"/>
    <property type="match status" value="1"/>
</dbReference>
<dbReference type="CDD" id="cd03312">
    <property type="entry name" value="CIMS_N_terminal_like"/>
    <property type="match status" value="1"/>
</dbReference>
<dbReference type="FunFam" id="3.20.20.210:FF:000002">
    <property type="entry name" value="5-methyltetrahydropteroyltriglutamate--homocysteine methyltransferase"/>
    <property type="match status" value="1"/>
</dbReference>
<dbReference type="Gene3D" id="3.20.20.210">
    <property type="match status" value="2"/>
</dbReference>
<dbReference type="HAMAP" id="MF_00172">
    <property type="entry name" value="Meth_synth"/>
    <property type="match status" value="1"/>
</dbReference>
<dbReference type="InterPro" id="IPR013215">
    <property type="entry name" value="Cbl-indep_Met_Synth_N"/>
</dbReference>
<dbReference type="InterPro" id="IPR006276">
    <property type="entry name" value="Cobalamin-indep_Met_synthase"/>
</dbReference>
<dbReference type="InterPro" id="IPR002629">
    <property type="entry name" value="Met_Synth_C/arc"/>
</dbReference>
<dbReference type="InterPro" id="IPR038071">
    <property type="entry name" value="UROD/MetE-like_sf"/>
</dbReference>
<dbReference type="NCBIfam" id="TIGR01371">
    <property type="entry name" value="met_syn_B12ind"/>
    <property type="match status" value="1"/>
</dbReference>
<dbReference type="NCBIfam" id="NF003556">
    <property type="entry name" value="PRK05222.1"/>
    <property type="match status" value="1"/>
</dbReference>
<dbReference type="PANTHER" id="PTHR30519">
    <property type="entry name" value="5-METHYLTETRAHYDROPTEROYLTRIGLUTAMATE--HOMOCYSTEINE METHYLTRANSFERASE"/>
    <property type="match status" value="1"/>
</dbReference>
<dbReference type="Pfam" id="PF08267">
    <property type="entry name" value="Meth_synt_1"/>
    <property type="match status" value="1"/>
</dbReference>
<dbReference type="Pfam" id="PF01717">
    <property type="entry name" value="Meth_synt_2"/>
    <property type="match status" value="1"/>
</dbReference>
<dbReference type="PIRSF" id="PIRSF000382">
    <property type="entry name" value="MeTrfase_B12_ind"/>
    <property type="match status" value="1"/>
</dbReference>
<dbReference type="SUPFAM" id="SSF51726">
    <property type="entry name" value="UROD/MetE-like"/>
    <property type="match status" value="2"/>
</dbReference>
<feature type="chain" id="PRO_1000017257" description="5-methyltetrahydropteroyltriglutamate--homocysteine methyltransferase">
    <location>
        <begin position="1"/>
        <end position="758"/>
    </location>
</feature>
<feature type="active site" description="Proton donor" evidence="1">
    <location>
        <position position="696"/>
    </location>
</feature>
<feature type="binding site" evidence="1">
    <location>
        <begin position="16"/>
        <end position="19"/>
    </location>
    <ligand>
        <name>5-methyltetrahydropteroyltri-L-glutamate</name>
        <dbReference type="ChEBI" id="CHEBI:58207"/>
    </ligand>
</feature>
<feature type="binding site" evidence="1">
    <location>
        <position position="112"/>
    </location>
    <ligand>
        <name>5-methyltetrahydropteroyltri-L-glutamate</name>
        <dbReference type="ChEBI" id="CHEBI:58207"/>
    </ligand>
</feature>
<feature type="binding site" evidence="1">
    <location>
        <begin position="433"/>
        <end position="435"/>
    </location>
    <ligand>
        <name>L-homocysteine</name>
        <dbReference type="ChEBI" id="CHEBI:58199"/>
    </ligand>
</feature>
<feature type="binding site" evidence="1">
    <location>
        <begin position="433"/>
        <end position="435"/>
    </location>
    <ligand>
        <name>L-methionine</name>
        <dbReference type="ChEBI" id="CHEBI:57844"/>
    </ligand>
</feature>
<feature type="binding site" evidence="1">
    <location>
        <position position="486"/>
    </location>
    <ligand>
        <name>L-homocysteine</name>
        <dbReference type="ChEBI" id="CHEBI:58199"/>
    </ligand>
</feature>
<feature type="binding site" evidence="1">
    <location>
        <position position="486"/>
    </location>
    <ligand>
        <name>L-methionine</name>
        <dbReference type="ChEBI" id="CHEBI:57844"/>
    </ligand>
</feature>
<feature type="binding site" evidence="1">
    <location>
        <begin position="517"/>
        <end position="518"/>
    </location>
    <ligand>
        <name>5-methyltetrahydropteroyltri-L-glutamate</name>
        <dbReference type="ChEBI" id="CHEBI:58207"/>
    </ligand>
</feature>
<feature type="binding site" evidence="1">
    <location>
        <position position="563"/>
    </location>
    <ligand>
        <name>5-methyltetrahydropteroyltri-L-glutamate</name>
        <dbReference type="ChEBI" id="CHEBI:58207"/>
    </ligand>
</feature>
<feature type="binding site" evidence="1">
    <location>
        <position position="601"/>
    </location>
    <ligand>
        <name>L-homocysteine</name>
        <dbReference type="ChEBI" id="CHEBI:58199"/>
    </ligand>
</feature>
<feature type="binding site" evidence="1">
    <location>
        <position position="601"/>
    </location>
    <ligand>
        <name>L-methionine</name>
        <dbReference type="ChEBI" id="CHEBI:57844"/>
    </ligand>
</feature>
<feature type="binding site" evidence="1">
    <location>
        <position position="607"/>
    </location>
    <ligand>
        <name>5-methyltetrahydropteroyltri-L-glutamate</name>
        <dbReference type="ChEBI" id="CHEBI:58207"/>
    </ligand>
</feature>
<feature type="binding site" evidence="1">
    <location>
        <position position="643"/>
    </location>
    <ligand>
        <name>Zn(2+)</name>
        <dbReference type="ChEBI" id="CHEBI:29105"/>
        <note>catalytic</note>
    </ligand>
</feature>
<feature type="binding site" evidence="1">
    <location>
        <position position="645"/>
    </location>
    <ligand>
        <name>Zn(2+)</name>
        <dbReference type="ChEBI" id="CHEBI:29105"/>
        <note>catalytic</note>
    </ligand>
</feature>
<feature type="binding site" evidence="1">
    <location>
        <position position="667"/>
    </location>
    <ligand>
        <name>Zn(2+)</name>
        <dbReference type="ChEBI" id="CHEBI:29105"/>
        <note>catalytic</note>
    </ligand>
</feature>
<feature type="binding site" evidence="1">
    <location>
        <position position="728"/>
    </location>
    <ligand>
        <name>Zn(2+)</name>
        <dbReference type="ChEBI" id="CHEBI:29105"/>
        <note>catalytic</note>
    </ligand>
</feature>
<gene>
    <name evidence="1" type="primary">metE</name>
    <name type="ordered locus">NGO_0928</name>
</gene>
<sequence>MTTLHFSGFPRVGAFRELKFAQEKYWRKEISEQELLDVAKDLREKNWKHQAAANADYVAVGDFTFYDHILDLQVATGAIPARFGFDSQNLPLEQFFQLARGNKDQFAIEMTKWFDTNYHYLVPEFHADTEFKANAKHYVQQLQEAQTLGLKAKPTVVGPLTFLWVGKEKGSVEFDRLSLLPKLLPVYVEILTALVEAGAEWIQIDEPALAVDLPKEWVEAYKDVYATLNKVSAKILLGTYFGSVAEHAALLKSLPVDGLHIDLVRAPEQLDAFAGYDKVLSAGVIDGRNIWRANLNKVLETVGPLQAKLGERLWISSSCSLLHTPFDLSVEEKLKANKPDLYSWLAFTLQKTQELRVLKAALNEGRDSVAEELAASQAAADSRANSSEIHRADVAKRLADLPVNAGQRKSPFADRIKAQQAWLNLPLLPTTNIGSFPQTTEIRQARAAFKKGELSASDYEAAMKKEIALVVEEQEKLDLDVLVHGEAERNDMVEYFGELLSGFAFTQYGWVQSYGSRCVKPPIIFGDVSRPEAMTVAWSTYAQNLTKRPMKGMLTGPVTILQWSFVRNDIPRATVCKQIALALNDEVLDLEKAGIKVIQIDEPAIREGLPLKRADWDAYLNWAGESFRLSSAGCEDSTQIHTHMCYSEFNDILPAIAAMDADVITIETSRSDMELLAAFGEFKYPNDIGPGVYDIHSPRVPTEAEVEHLLRKAIEVVPVERLWVNPDCGLKTRGWKETLEQLQVMMNVTRKLRAELAK</sequence>
<keyword id="KW-0028">Amino-acid biosynthesis</keyword>
<keyword id="KW-0479">Metal-binding</keyword>
<keyword id="KW-0486">Methionine biosynthesis</keyword>
<keyword id="KW-0489">Methyltransferase</keyword>
<keyword id="KW-1185">Reference proteome</keyword>
<keyword id="KW-0677">Repeat</keyword>
<keyword id="KW-0808">Transferase</keyword>
<keyword id="KW-0862">Zinc</keyword>
<reference key="1">
    <citation type="submission" date="2003-03" db="EMBL/GenBank/DDBJ databases">
        <title>The complete genome sequence of Neisseria gonorrhoeae.</title>
        <authorList>
            <person name="Lewis L.A."/>
            <person name="Gillaspy A.F."/>
            <person name="McLaughlin R.E."/>
            <person name="Gipson M."/>
            <person name="Ducey T.F."/>
            <person name="Ownbey T."/>
            <person name="Hartman K."/>
            <person name="Nydick C."/>
            <person name="Carson M.B."/>
            <person name="Vaughn J."/>
            <person name="Thomson C."/>
            <person name="Song L."/>
            <person name="Lin S."/>
            <person name="Yuan X."/>
            <person name="Najar F."/>
            <person name="Zhan M."/>
            <person name="Ren Q."/>
            <person name="Zhu H."/>
            <person name="Qi S."/>
            <person name="Kenton S.M."/>
            <person name="Lai H."/>
            <person name="White J.D."/>
            <person name="Clifton S."/>
            <person name="Roe B.A."/>
            <person name="Dyer D.W."/>
        </authorList>
    </citation>
    <scope>NUCLEOTIDE SEQUENCE [LARGE SCALE GENOMIC DNA]</scope>
    <source>
        <strain>ATCC 700825 / FA 1090</strain>
    </source>
</reference>
<protein>
    <recommendedName>
        <fullName evidence="1">5-methyltetrahydropteroyltriglutamate--homocysteine methyltransferase</fullName>
        <ecNumber evidence="1">2.1.1.14</ecNumber>
    </recommendedName>
    <alternativeName>
        <fullName evidence="1">Cobalamin-independent methionine synthase</fullName>
    </alternativeName>
    <alternativeName>
        <fullName evidence="1">Methionine synthase, vitamin-B12 independent isozyme</fullName>
    </alternativeName>
</protein>
<accession>Q5F863</accession>
<evidence type="ECO:0000255" key="1">
    <source>
        <dbReference type="HAMAP-Rule" id="MF_00172"/>
    </source>
</evidence>